<comment type="function">
    <text>Potential calcium-dependent cell-adhesion protein. May be involved in the establishment and maintenance of specific neuronal connections in the brain.</text>
</comment>
<comment type="subcellular location">
    <subcellularLocation>
        <location evidence="1">Cell membrane</location>
        <topology evidence="1">Single-pass type I membrane protein</topology>
    </subcellularLocation>
</comment>
<comment type="alternative products">
    <event type="alternative splicing"/>
    <isoform>
        <id>Q9Y5F9-1</id>
        <name>1</name>
        <sequence type="displayed"/>
    </isoform>
    <isoform>
        <id>Q9Y5F9-2</id>
        <name>2</name>
        <name>Short</name>
        <sequence type="described" ref="VSP_008694 VSP_008695"/>
    </isoform>
</comment>
<feature type="signal peptide" evidence="2">
    <location>
        <begin position="1"/>
        <end position="30"/>
    </location>
</feature>
<feature type="chain" id="PRO_0000003981" description="Protocadherin gamma-B6">
    <location>
        <begin position="31"/>
        <end position="930"/>
    </location>
</feature>
<feature type="topological domain" description="Extracellular" evidence="2">
    <location>
        <begin position="31"/>
        <end position="691"/>
    </location>
</feature>
<feature type="transmembrane region" description="Helical" evidence="2">
    <location>
        <begin position="692"/>
        <end position="712"/>
    </location>
</feature>
<feature type="topological domain" description="Cytoplasmic" evidence="2">
    <location>
        <begin position="713"/>
        <end position="930"/>
    </location>
</feature>
<feature type="domain" description="Cadherin 1" evidence="3">
    <location>
        <begin position="31"/>
        <end position="133"/>
    </location>
</feature>
<feature type="domain" description="Cadherin 2" evidence="3">
    <location>
        <begin position="134"/>
        <end position="242"/>
    </location>
</feature>
<feature type="domain" description="Cadherin 3" evidence="3">
    <location>
        <begin position="243"/>
        <end position="347"/>
    </location>
</feature>
<feature type="domain" description="Cadherin 4" evidence="3">
    <location>
        <begin position="348"/>
        <end position="452"/>
    </location>
</feature>
<feature type="domain" description="Cadherin 5" evidence="3">
    <location>
        <begin position="453"/>
        <end position="562"/>
    </location>
</feature>
<feature type="domain" description="Cadherin 6" evidence="3">
    <location>
        <begin position="570"/>
        <end position="675"/>
    </location>
</feature>
<feature type="region of interest" description="Disordered" evidence="4">
    <location>
        <begin position="791"/>
        <end position="839"/>
    </location>
</feature>
<feature type="region of interest" description="Disordered" evidence="4">
    <location>
        <begin position="900"/>
        <end position="930"/>
    </location>
</feature>
<feature type="compositionally biased region" description="Polar residues" evidence="4">
    <location>
        <begin position="800"/>
        <end position="839"/>
    </location>
</feature>
<feature type="compositionally biased region" description="Basic residues" evidence="4">
    <location>
        <begin position="920"/>
        <end position="930"/>
    </location>
</feature>
<feature type="glycosylation site" description="N-linked (GlcNAc...) asparagine" evidence="2">
    <location>
        <position position="304"/>
    </location>
</feature>
<feature type="glycosylation site" description="N-linked (GlcNAc...) asparagine" evidence="2">
    <location>
        <position position="419"/>
    </location>
</feature>
<feature type="glycosylation site" description="N-linked (GlcNAc...) asparagine" evidence="2">
    <location>
        <position position="545"/>
    </location>
</feature>
<feature type="splice variant" id="VSP_008694" description="In isoform 2." evidence="5">
    <original>QAPPNTDWRFSQAQ</original>
    <variation>VSFSFLCVIYLIVY</variation>
    <location>
        <begin position="807"/>
        <end position="820"/>
    </location>
</feature>
<feature type="splice variant" id="VSP_008695" description="In isoform 2." evidence="5">
    <location>
        <begin position="821"/>
        <end position="930"/>
    </location>
</feature>
<feature type="sequence variant" id="VAR_021883" description="In dbSNP:rs3749768.">
    <original>P</original>
    <variation>S</variation>
    <location>
        <position position="684"/>
    </location>
</feature>
<feature type="sequence variant" id="VAR_021884" description="In dbSNP:rs3749767.">
    <original>A</original>
    <variation>T</variation>
    <location>
        <position position="722"/>
    </location>
</feature>
<feature type="sequence variant" id="VAR_048572" description="In dbSNP:rs6891442.">
    <original>S</original>
    <variation>A</variation>
    <location>
        <position position="775"/>
    </location>
</feature>
<gene>
    <name type="primary">PCDHGB6</name>
</gene>
<accession>Q9Y5F9</accession>
<accession>Q9Y5C5</accession>
<evidence type="ECO:0000250" key="1"/>
<evidence type="ECO:0000255" key="2"/>
<evidence type="ECO:0000255" key="3">
    <source>
        <dbReference type="PROSITE-ProRule" id="PRU00043"/>
    </source>
</evidence>
<evidence type="ECO:0000256" key="4">
    <source>
        <dbReference type="SAM" id="MobiDB-lite"/>
    </source>
</evidence>
<evidence type="ECO:0000303" key="5">
    <source>
    </source>
</evidence>
<name>PCDGI_HUMAN</name>
<protein>
    <recommendedName>
        <fullName>Protocadherin gamma-B6</fullName>
        <shortName>PCDH-gamma-B6</shortName>
    </recommendedName>
</protein>
<organism>
    <name type="scientific">Homo sapiens</name>
    <name type="common">Human</name>
    <dbReference type="NCBI Taxonomy" id="9606"/>
    <lineage>
        <taxon>Eukaryota</taxon>
        <taxon>Metazoa</taxon>
        <taxon>Chordata</taxon>
        <taxon>Craniata</taxon>
        <taxon>Vertebrata</taxon>
        <taxon>Euteleostomi</taxon>
        <taxon>Mammalia</taxon>
        <taxon>Eutheria</taxon>
        <taxon>Euarchontoglires</taxon>
        <taxon>Primates</taxon>
        <taxon>Haplorrhini</taxon>
        <taxon>Catarrhini</taxon>
        <taxon>Hominidae</taxon>
        <taxon>Homo</taxon>
    </lineage>
</organism>
<dbReference type="EMBL" id="AF152335">
    <property type="protein sequence ID" value="AAD43729.1"/>
    <property type="molecule type" value="mRNA"/>
</dbReference>
<dbReference type="EMBL" id="AF152522">
    <property type="protein sequence ID" value="AAD43782.1"/>
    <property type="molecule type" value="mRNA"/>
</dbReference>
<dbReference type="CCDS" id="CCDS54929.1">
    <molecule id="Q9Y5F9-1"/>
</dbReference>
<dbReference type="CCDS" id="CCDS75342.1">
    <molecule id="Q9Y5F9-2"/>
</dbReference>
<dbReference type="RefSeq" id="NP_061749.1">
    <molecule id="Q9Y5F9-1"/>
    <property type="nucleotide sequence ID" value="NM_018926.3"/>
</dbReference>
<dbReference type="RefSeq" id="NP_115271.1">
    <molecule id="Q9Y5F9-2"/>
    <property type="nucleotide sequence ID" value="NM_032100.1"/>
</dbReference>
<dbReference type="SMR" id="Q9Y5F9"/>
<dbReference type="BioGRID" id="121040">
    <property type="interactions" value="13"/>
</dbReference>
<dbReference type="FunCoup" id="Q9Y5F9">
    <property type="interactions" value="2"/>
</dbReference>
<dbReference type="IntAct" id="Q9Y5F9">
    <property type="interactions" value="10"/>
</dbReference>
<dbReference type="MINT" id="Q9Y5F9"/>
<dbReference type="STRING" id="9606.ENSP00000428603"/>
<dbReference type="GlyCosmos" id="Q9Y5F9">
    <property type="glycosylation" value="3 sites, No reported glycans"/>
</dbReference>
<dbReference type="GlyGen" id="Q9Y5F9">
    <property type="glycosylation" value="3 sites"/>
</dbReference>
<dbReference type="iPTMnet" id="Q9Y5F9"/>
<dbReference type="PhosphoSitePlus" id="Q9Y5F9"/>
<dbReference type="BioMuta" id="PCDHGB6"/>
<dbReference type="DMDM" id="37999829"/>
<dbReference type="jPOST" id="Q9Y5F9"/>
<dbReference type="MassIVE" id="Q9Y5F9"/>
<dbReference type="PaxDb" id="9606-ENSP00000428603"/>
<dbReference type="PeptideAtlas" id="Q9Y5F9"/>
<dbReference type="ProteomicsDB" id="86359">
    <molecule id="Q9Y5F9-1"/>
</dbReference>
<dbReference type="ProteomicsDB" id="86360">
    <molecule id="Q9Y5F9-2"/>
</dbReference>
<dbReference type="Antibodypedia" id="57507">
    <property type="antibodies" value="10 antibodies from 6 providers"/>
</dbReference>
<dbReference type="DNASU" id="56100"/>
<dbReference type="Ensembl" id="ENST00000520790.2">
    <molecule id="Q9Y5F9-1"/>
    <property type="protein sequence ID" value="ENSP00000428603.1"/>
    <property type="gene ID" value="ENSG00000253305.3"/>
</dbReference>
<dbReference type="Ensembl" id="ENST00000616430.1">
    <molecule id="Q9Y5F9-2"/>
    <property type="protein sequence ID" value="ENSP00000479143.1"/>
    <property type="gene ID" value="ENSG00000253305.3"/>
</dbReference>
<dbReference type="GeneID" id="56100"/>
<dbReference type="KEGG" id="hsa:56100"/>
<dbReference type="MANE-Select" id="ENST00000520790.2">
    <property type="protein sequence ID" value="ENSP00000428603.1"/>
    <property type="RefSeq nucleotide sequence ID" value="NM_018926.3"/>
    <property type="RefSeq protein sequence ID" value="NP_061749.1"/>
</dbReference>
<dbReference type="UCSC" id="uc003lki.2">
    <molecule id="Q9Y5F9-1"/>
    <property type="organism name" value="human"/>
</dbReference>
<dbReference type="AGR" id="HGNC:8713"/>
<dbReference type="CTD" id="56100"/>
<dbReference type="DisGeNET" id="56100"/>
<dbReference type="GeneCards" id="PCDHGB6"/>
<dbReference type="HGNC" id="HGNC:8713">
    <property type="gene designation" value="PCDHGB6"/>
</dbReference>
<dbReference type="HPA" id="ENSG00000253305">
    <property type="expression patterns" value="Tissue enhanced (brain)"/>
</dbReference>
<dbReference type="MalaCards" id="PCDHGB6"/>
<dbReference type="MIM" id="604968">
    <property type="type" value="gene"/>
</dbReference>
<dbReference type="MIM" id="606303">
    <property type="type" value="gene"/>
</dbReference>
<dbReference type="neXtProt" id="NX_Q9Y5F9"/>
<dbReference type="OpenTargets" id="ENSG00000253305"/>
<dbReference type="PharmGKB" id="PA33061"/>
<dbReference type="VEuPathDB" id="HostDB:ENSG00000253305"/>
<dbReference type="eggNOG" id="KOG3594">
    <property type="taxonomic scope" value="Eukaryota"/>
</dbReference>
<dbReference type="GeneTree" id="ENSGT00940000165737"/>
<dbReference type="HOGENOM" id="CLU_006480_3_0_1"/>
<dbReference type="InParanoid" id="Q9Y5F9"/>
<dbReference type="OMA" id="DPDINTN"/>
<dbReference type="OrthoDB" id="6252479at2759"/>
<dbReference type="PAN-GO" id="Q9Y5F9">
    <property type="GO annotations" value="2 GO annotations based on evolutionary models"/>
</dbReference>
<dbReference type="PhylomeDB" id="Q9Y5F9"/>
<dbReference type="TreeFam" id="TF332299"/>
<dbReference type="PathwayCommons" id="Q9Y5F9"/>
<dbReference type="SIGNOR" id="Q9Y5F9"/>
<dbReference type="BioGRID-ORCS" id="56100">
    <property type="hits" value="9 hits in 1097 CRISPR screens"/>
</dbReference>
<dbReference type="GenomeRNAi" id="56100"/>
<dbReference type="Pharos" id="Q9Y5F9">
    <property type="development level" value="Tdark"/>
</dbReference>
<dbReference type="PRO" id="PR:Q9Y5F9"/>
<dbReference type="Proteomes" id="UP000005640">
    <property type="component" value="Chromosome 5"/>
</dbReference>
<dbReference type="RNAct" id="Q9Y5F9">
    <property type="molecule type" value="protein"/>
</dbReference>
<dbReference type="Bgee" id="ENSG00000253305">
    <property type="expression patterns" value="Expressed in ganglionic eminence and 90 other cell types or tissues"/>
</dbReference>
<dbReference type="GO" id="GO:0005886">
    <property type="term" value="C:plasma membrane"/>
    <property type="evidence" value="ECO:0000318"/>
    <property type="project" value="GO_Central"/>
</dbReference>
<dbReference type="GO" id="GO:0005509">
    <property type="term" value="F:calcium ion binding"/>
    <property type="evidence" value="ECO:0007669"/>
    <property type="project" value="InterPro"/>
</dbReference>
<dbReference type="GO" id="GO:0007155">
    <property type="term" value="P:cell adhesion"/>
    <property type="evidence" value="ECO:0000318"/>
    <property type="project" value="GO_Central"/>
</dbReference>
<dbReference type="GO" id="GO:0007156">
    <property type="term" value="P:homophilic cell adhesion via plasma membrane adhesion molecules"/>
    <property type="evidence" value="ECO:0007669"/>
    <property type="project" value="InterPro"/>
</dbReference>
<dbReference type="GO" id="GO:0007399">
    <property type="term" value="P:nervous system development"/>
    <property type="evidence" value="ECO:0007669"/>
    <property type="project" value="UniProtKB-ARBA"/>
</dbReference>
<dbReference type="CDD" id="cd11304">
    <property type="entry name" value="Cadherin_repeat"/>
    <property type="match status" value="6"/>
</dbReference>
<dbReference type="FunFam" id="2.60.40.60:FF:000004">
    <property type="entry name" value="Protocadherin 1 gamma 2"/>
    <property type="match status" value="1"/>
</dbReference>
<dbReference type="FunFam" id="2.60.40.60:FF:000001">
    <property type="entry name" value="Protocadherin alpha 2"/>
    <property type="match status" value="1"/>
</dbReference>
<dbReference type="FunFam" id="2.60.40.60:FF:000002">
    <property type="entry name" value="Protocadherin alpha 2"/>
    <property type="match status" value="1"/>
</dbReference>
<dbReference type="FunFam" id="2.60.40.60:FF:000006">
    <property type="entry name" value="Protocadherin alpha 2"/>
    <property type="match status" value="1"/>
</dbReference>
<dbReference type="FunFam" id="2.60.40.60:FF:000129">
    <property type="entry name" value="protocadherin alpha-C2 isoform X1"/>
    <property type="match status" value="1"/>
</dbReference>
<dbReference type="FunFam" id="2.60.40.60:FF:000018">
    <property type="entry name" value="Protocadherin gamma c3"/>
    <property type="match status" value="1"/>
</dbReference>
<dbReference type="Gene3D" id="2.60.40.60">
    <property type="entry name" value="Cadherins"/>
    <property type="match status" value="6"/>
</dbReference>
<dbReference type="InterPro" id="IPR002126">
    <property type="entry name" value="Cadherin-like_dom"/>
</dbReference>
<dbReference type="InterPro" id="IPR015919">
    <property type="entry name" value="Cadherin-like_sf"/>
</dbReference>
<dbReference type="InterPro" id="IPR032455">
    <property type="entry name" value="Cadherin_C"/>
</dbReference>
<dbReference type="InterPro" id="IPR031904">
    <property type="entry name" value="Cadherin_CBD"/>
</dbReference>
<dbReference type="InterPro" id="IPR020894">
    <property type="entry name" value="Cadherin_CS"/>
</dbReference>
<dbReference type="InterPro" id="IPR013164">
    <property type="entry name" value="Cadherin_N"/>
</dbReference>
<dbReference type="InterPro" id="IPR050174">
    <property type="entry name" value="Protocadherin/Cadherin-CA"/>
</dbReference>
<dbReference type="PANTHER" id="PTHR24028">
    <property type="entry name" value="CADHERIN-87A"/>
    <property type="match status" value="1"/>
</dbReference>
<dbReference type="PANTHER" id="PTHR24028:SF66">
    <property type="entry name" value="PROTOCADHERIN GAMMA-B6"/>
    <property type="match status" value="1"/>
</dbReference>
<dbReference type="Pfam" id="PF00028">
    <property type="entry name" value="Cadherin"/>
    <property type="match status" value="5"/>
</dbReference>
<dbReference type="Pfam" id="PF08266">
    <property type="entry name" value="Cadherin_2"/>
    <property type="match status" value="1"/>
</dbReference>
<dbReference type="Pfam" id="PF16492">
    <property type="entry name" value="Cadherin_C_2"/>
    <property type="match status" value="1"/>
</dbReference>
<dbReference type="Pfam" id="PF15974">
    <property type="entry name" value="Cadherin_tail"/>
    <property type="match status" value="1"/>
</dbReference>
<dbReference type="PRINTS" id="PR00205">
    <property type="entry name" value="CADHERIN"/>
</dbReference>
<dbReference type="SMART" id="SM00112">
    <property type="entry name" value="CA"/>
    <property type="match status" value="6"/>
</dbReference>
<dbReference type="SUPFAM" id="SSF49313">
    <property type="entry name" value="Cadherin-like"/>
    <property type="match status" value="6"/>
</dbReference>
<dbReference type="PROSITE" id="PS00232">
    <property type="entry name" value="CADHERIN_1"/>
    <property type="match status" value="5"/>
</dbReference>
<dbReference type="PROSITE" id="PS50268">
    <property type="entry name" value="CADHERIN_2"/>
    <property type="match status" value="6"/>
</dbReference>
<reference key="1">
    <citation type="journal article" date="1999" name="Cell">
        <title>A striking organization of a large family of human neural cadherin-like cell adhesion genes.</title>
        <authorList>
            <person name="Wu Q."/>
            <person name="Maniatis T."/>
        </authorList>
    </citation>
    <scope>NUCLEOTIDE SEQUENCE [MRNA] (ISOFORMS 1 AND 2)</scope>
    <source>
        <tissue>Brain</tissue>
    </source>
</reference>
<proteinExistence type="evidence at protein level"/>
<keyword id="KW-0025">Alternative splicing</keyword>
<keyword id="KW-0106">Calcium</keyword>
<keyword id="KW-0130">Cell adhesion</keyword>
<keyword id="KW-1003">Cell membrane</keyword>
<keyword id="KW-0325">Glycoprotein</keyword>
<keyword id="KW-0472">Membrane</keyword>
<keyword id="KW-1267">Proteomics identification</keyword>
<keyword id="KW-1185">Reference proteome</keyword>
<keyword id="KW-0677">Repeat</keyword>
<keyword id="KW-0732">Signal</keyword>
<keyword id="KW-0812">Transmembrane</keyword>
<keyword id="KW-1133">Transmembrane helix</keyword>
<sequence length="930" mass="101043">MGGSCAQRRRAGPRQVLFPLLLPLFYPTLSEPIRYSIPEELAKGSVVGNLAKDLGLSVLDVSARKLRVSAEKLHFSVDAESGDLLVKNRIDREQICKERRRCELQLEAVVENPLNIFHVIVVIEDVNDHAPQFDKKEIHLEIFESASAGTRLSLDPATDPDININSIKDYKINSNPYFSLMVRVNSDGGKYPELSLEKLLDREEQRSHSLILTALDGGDPPRSATAHIEISVKDTNDNPPVFSRDEYRISLSENLPPGSPVLQVTATDQDEGVNAEINYYFRSTAQSTKHMFSLDEKTGMIKNNQSFDFEDVERYTMEVEAKDGGGLSTQCKVIIEILDENDNSPEIIITSLSDQILENSPPGMVVALFKTRDLDFGGNGEVRCNIETDIPFKIYSSSNNYYKLVTDGALDREQTPEYNVTIVATDRGKPPLSSSRSITLYVADINDNAPVFDQTSYVVHVAENNPPGASIAQVSASDPDLGLNGHISYSIVASDLEPLAVSSYVSVSAQSGVVFAQRAFDHEQLRAFALTLQARDHGSPTLSANVSLRVLVGDRNDNAPRVLYPALGPDGSAFFDMVPRSAEPGYLVTKVVAVDADSGHNAWLSYHVLQASEPGLFSLGLRTGEVRTARALGDRDAARQRLLVAVRDGGQPPLSATATLHLVFADNLQEILPDLSDRPVLSDPQAELQFYLVVALALISVLFLLAVILAIALRLRRSLSPATWDCFHPGLCVKSGPVVPPNYSEGTLPYSYNLCIAHTGTKEFNFLKCSVPLHSNEDMVCSVSPGALIPPHGGEDLTSHPETLTSQAPPNTDWRFSQAQRPGTSGSQNGDDTGTWPNNQFDTEMLQAMILASASEAADGSSTLGGGAGTMGLSARYGPQFTLQHVPDYRQNVYIPGSNATLTNAAGKRDGKAPAGGNGNKKKSGKKEKK</sequence>